<organism>
    <name type="scientific">Mus musculus</name>
    <name type="common">Mouse</name>
    <dbReference type="NCBI Taxonomy" id="10090"/>
    <lineage>
        <taxon>Eukaryota</taxon>
        <taxon>Metazoa</taxon>
        <taxon>Chordata</taxon>
        <taxon>Craniata</taxon>
        <taxon>Vertebrata</taxon>
        <taxon>Euteleostomi</taxon>
        <taxon>Mammalia</taxon>
        <taxon>Eutheria</taxon>
        <taxon>Euarchontoglires</taxon>
        <taxon>Glires</taxon>
        <taxon>Rodentia</taxon>
        <taxon>Myomorpha</taxon>
        <taxon>Muroidea</taxon>
        <taxon>Muridae</taxon>
        <taxon>Murinae</taxon>
        <taxon>Mus</taxon>
        <taxon>Mus</taxon>
    </lineage>
</organism>
<reference key="1">
    <citation type="journal article" date="1988" name="Mol. Cell. Biol.">
        <title>Cloning and characterization of a second member of the mouse mdr gene family.</title>
        <authorList>
            <person name="Gros P."/>
            <person name="Raymond M."/>
            <person name="Bell J."/>
            <person name="Housman D."/>
        </authorList>
    </citation>
    <scope>NUCLEOTIDE SEQUENCE [MRNA]</scope>
</reference>
<reference key="2">
    <citation type="submission" date="2005-07" db="EMBL/GenBank/DDBJ databases">
        <authorList>
            <person name="Mural R.J."/>
            <person name="Adams M.D."/>
            <person name="Myers E.W."/>
            <person name="Smith H.O."/>
            <person name="Venter J.C."/>
        </authorList>
    </citation>
    <scope>NUCLEOTIDE SEQUENCE [LARGE SCALE GENOMIC DNA]</scope>
</reference>
<reference key="3">
    <citation type="journal article" date="2004" name="Genome Res.">
        <title>The status, quality, and expansion of the NIH full-length cDNA project: the Mammalian Gene Collection (MGC).</title>
        <authorList>
            <consortium name="The MGC Project Team"/>
        </authorList>
    </citation>
    <scope>NUCLEOTIDE SEQUENCE [LARGE SCALE MRNA]</scope>
    <source>
        <tissue>Brain</tissue>
    </source>
</reference>
<reference key="4">
    <citation type="submission" date="1991-12" db="EMBL/GenBank/DDBJ databases">
        <title>5'-end analysis of the murine mdr2 mRNA reveals complex and tissue-specific processing.</title>
        <authorList>
            <person name="Kirschner L.S."/>
            <person name="Horwitz S.B."/>
        </authorList>
    </citation>
    <scope>NUCLEOTIDE SEQUENCE [GENOMIC DNA] OF 1-23</scope>
    <source>
        <strain>BALB/cJ</strain>
    </source>
</reference>
<reference key="5">
    <citation type="journal article" date="1996" name="Nucleic Acids Res.">
        <title>De novo generation of simple sequence during gene amplification.</title>
        <authorList>
            <person name="Kirschner L.S."/>
        </authorList>
    </citation>
    <scope>NUCLEOTIDE SEQUENCE [GENOMIC DNA] OF 43-92</scope>
    <source>
        <strain>BALB/cJ</strain>
        <tissue>Liver</tissue>
    </source>
</reference>
<reference key="6">
    <citation type="journal article" date="1989" name="Mol. Cell. Biol.">
        <title>The three mouse multidrug resistance (mdr) genes are expressed in a tissue-specific manner in normal mouse tissues.</title>
        <authorList>
            <person name="Croop J.M."/>
            <person name="Raymond M."/>
            <person name="Haber D."/>
            <person name="Devault A."/>
            <person name="Arceci R.J."/>
            <person name="Gros P."/>
            <person name="Housman D.E."/>
        </authorList>
    </citation>
    <scope>TISSUE SPECIFICITY</scope>
</reference>
<reference key="7">
    <citation type="journal article" date="1990" name="Mol. Cell. Biol.">
        <title>Physical mapping, amplification, and overexpression of the mouse mdr gene family in multidrug-resistant cells.</title>
        <authorList>
            <person name="Raymond M."/>
            <person name="Rose E."/>
            <person name="Housman D.E."/>
            <person name="Gros P."/>
        </authorList>
    </citation>
    <scope>TISSUE SPECIFICITY</scope>
</reference>
<reference key="8">
    <citation type="journal article" date="1991" name="Mol. Cell. Biol.">
        <title>Functional analysis of chimeric genes obtained by exchanging homologous domains of the mouse mdr1 and mdr2 genes.</title>
        <authorList>
            <person name="Buschman E."/>
            <person name="Gros P."/>
        </authorList>
    </citation>
    <scope>ABSENCE OF FUNCTION</scope>
</reference>
<reference key="9">
    <citation type="journal article" date="1992" name="J. Biol. Chem.">
        <title>mdr2 encodes P-glycoprotein expressed in the bile canalicular membrane as determined by isoform-specific antibodies.</title>
        <authorList>
            <person name="Buschman E."/>
            <person name="Arceci R.J."/>
            <person name="Croop J.M."/>
            <person name="Che M."/>
            <person name="Arias I.M."/>
            <person name="Housman D.E."/>
            <person name="Gros P."/>
        </authorList>
    </citation>
    <scope>SUBCELLULAR LOCATION</scope>
    <scope>TISSUE SPECIFICITY</scope>
</reference>
<reference key="10">
    <citation type="journal article" date="1993" name="Cell">
        <title>Homozygous disruption of the murine mdr2 P-glycoprotein gene leads to a complete absence of phospholipid from bile and to liver disease.</title>
        <authorList>
            <person name="Smit J.J."/>
            <person name="Schinkel A.H."/>
            <person name="Oude Elferink R.P."/>
            <person name="Groen A.K."/>
            <person name="Wagenaar E."/>
            <person name="van Deemter L."/>
            <person name="Mol C.A."/>
            <person name="Ottenhoff R."/>
            <person name="van der Lugt N.M."/>
            <person name="van Roon M.A."/>
        </authorList>
    </citation>
    <scope>FUNCTION</scope>
    <scope>SUBCELLULAR LOCATION</scope>
    <scope>DISRUPTION PHENOTYPE</scope>
</reference>
<reference key="11">
    <citation type="journal article" date="1994" name="Cell">
        <title>Phosphatidylcholine translocase: a physiological role for the mdr2 gene.</title>
        <authorList>
            <person name="Ruetz S."/>
            <person name="Gros P."/>
        </authorList>
    </citation>
    <scope>FUNCTION</scope>
    <scope>ACTIVITY REGULATION</scope>
    <scope>CATALYTIC ACTIVITY</scope>
</reference>
<reference key="12">
    <citation type="journal article" date="1995" name="J. Biol. Chem.">
        <title>Enhancement of Mdr2-mediated phosphatidylcholine translocation by the bile salt taurocholate. Implications for hepatic bile formation.</title>
        <authorList>
            <person name="Ruetz S."/>
            <person name="Gros P."/>
        </authorList>
    </citation>
    <scope>FUNCTION</scope>
    <scope>ACTIVITY REGULATION</scope>
</reference>
<reference key="13">
    <citation type="journal article" date="1995" name="J. Clin. Invest.">
        <title>Regulation of biliary lipid secretion by mdr2 P-glycoprotein in the mouse.</title>
        <authorList>
            <person name="Oude Elferink R.P."/>
            <person name="Ottenhoff R."/>
            <person name="van Wijland M."/>
            <person name="Smit J.J."/>
            <person name="Schinkel A.H."/>
            <person name="Groen A.K."/>
        </authorList>
    </citation>
    <scope>FUNCTION</scope>
    <scope>DISRUPTION PHENOTYPE</scope>
</reference>
<reference key="14">
    <citation type="journal article" date="1996" name="Biochem. J.">
        <title>Fibrates induce mdr2 gene expression and biliary phospholipid secretion in the mouse.</title>
        <authorList>
            <person name="Chianale J."/>
            <person name="Vollrath V."/>
            <person name="Wielandt A.M."/>
            <person name="Amigo L."/>
            <person name="Rigotti A."/>
            <person name="Nervi F."/>
            <person name="Gonzalez S."/>
            <person name="Andrade L."/>
            <person name="Pizarro M."/>
            <person name="Accatino L."/>
        </authorList>
    </citation>
    <scope>SUBCELLULAR LOCATION</scope>
    <scope>INDUCTION</scope>
    <scope>TISSUE SPECIFICITY</scope>
</reference>
<reference key="15">
    <citation type="journal article" date="1996" name="J. Lipid Res.">
        <title>Uncoupling of biliary phospholipid and cholesterol secretion in mice with reduced expression of mdr2 P-glycoprotein.</title>
        <authorList>
            <person name="Oude Elferink R.P."/>
            <person name="Ottenhoff R."/>
            <person name="van Wijland M."/>
            <person name="Frijters C.M."/>
            <person name="van Nieuwkerk C."/>
            <person name="Groen A.K."/>
        </authorList>
    </citation>
    <scope>FUNCTION</scope>
    <scope>DISRUPTION PHENOTYPE</scope>
</reference>
<reference key="16">
    <citation type="journal article" date="1997" name="J. Clin. Invest.">
        <title>Hepatic secretion of phospholipid vesicles in the mouse critically depends on mdr2 or MDR3 P-glycoprotein expression. Visualization by electron microscopy.</title>
        <authorList>
            <person name="Crawford A.R."/>
            <person name="Smith A.J."/>
            <person name="Hatch V.C."/>
            <person name="Oude Elferink R.P."/>
            <person name="Borst P."/>
            <person name="Crawford J.M."/>
        </authorList>
    </citation>
    <scope>FUNCTION</scope>
    <scope>DISRUPTION PHENOTYPE</scope>
</reference>
<reference key="17">
    <citation type="journal article" date="2003" name="Biochem. J.">
        <title>Peroxisome proliferator-activated receptor alpha (PPARalpha)-mediated regulation of multidrug resistance 2 (Mdr2) expression and function in mice.</title>
        <authorList>
            <person name="Kok T."/>
            <person name="Bloks V.W."/>
            <person name="Wolters H."/>
            <person name="Havinga R."/>
            <person name="Jansen P.L."/>
            <person name="Staels B."/>
            <person name="Kuipers F."/>
        </authorList>
    </citation>
    <scope>INDUCTION</scope>
</reference>
<reference key="18">
    <citation type="journal article" date="2010" name="Cell">
        <title>A tissue-specific atlas of mouse protein phosphorylation and expression.</title>
        <authorList>
            <person name="Huttlin E.L."/>
            <person name="Jedrychowski M.P."/>
            <person name="Elias J.E."/>
            <person name="Goswami T."/>
            <person name="Rad R."/>
            <person name="Beausoleil S.A."/>
            <person name="Villen J."/>
            <person name="Haas W."/>
            <person name="Sowa M.E."/>
            <person name="Gygi S.P."/>
        </authorList>
    </citation>
    <scope>PHOSPHORYLATION [LARGE SCALE ANALYSIS] AT SER-24</scope>
    <scope>IDENTIFICATION BY MASS SPECTROMETRY [LARGE SCALE ANALYSIS]</scope>
    <source>
        <tissue>Liver</tissue>
        <tissue>Spleen</tissue>
    </source>
</reference>
<reference key="19">
    <citation type="journal article" date="2011" name="Gastroenterology">
        <title>Complementary functions of the flippase ATP8B1 and the floppase ABCB4 in maintaining canalicular membrane integrity.</title>
        <authorList>
            <person name="Groen A."/>
            <person name="Romero M.R."/>
            <person name="Kunne C."/>
            <person name="Hoosdally S.J."/>
            <person name="Dixon P.H."/>
            <person name="Wooding C."/>
            <person name="Williamson C."/>
            <person name="Seppen J."/>
            <person name="Van den Oever K."/>
            <person name="Mok K.S."/>
            <person name="Paulusma C.C."/>
            <person name="Linton K.J."/>
            <person name="Oude Elferink R.P."/>
        </authorList>
    </citation>
    <scope>FUNCTION</scope>
    <scope>DISRUPTION PHENOTYPE</scope>
</reference>
<reference key="20">
    <citation type="journal article" date="2013" name="J. Lipid Res.">
        <title>Bile salt-stimulated phospholipid efflux mediated by ABCB4 localized in nonraft membranes.</title>
        <authorList>
            <person name="Morita S.Y."/>
            <person name="Tsuda T."/>
            <person name="Horikami M."/>
            <person name="Teraoka R."/>
            <person name="Kitagawa S."/>
            <person name="Terada T."/>
        </authorList>
    </citation>
    <scope>SUBCELLULAR LOCATION</scope>
</reference>
<comment type="function">
    <text evidence="2 10 11 14 15 16 17 19 20">Energy-dependent phospholipid efflux translocator that acts as a positive regulator of biliary lipid secretion. Functions as a floppase that translocates specifically phosphatidylcholine (PC) from the inner to the outer leaflet of the canalicular membrane bilayer into the canaliculi between hepatocytes. Translocation of PC makes the biliary phospholipids available for extraction into the canaliculi lumen by bile salt mixed micelles and therefore protects the biliary tree from the detergent activity of bile salts (PubMed:7592705, PubMed:7814632, PubMed:7912658, PubMed:8106172, PubMed:8725158, PubMed:9366571). Plays a role in the recruitment of phosphatidylcholine (PC), phosphatidylethanolamine (PE) and sphingomyelin (SM) molecules to nonraft membranes and to further enrichment of SM and cholesterol in raft membranes in hepatocytes (By similarity). Required for proper phospholipid bile formation (PubMed:8106172). Indirectly involved in cholesterol efflux activity from hepatocytes into the canalicular lumen in the presence of bile salts in an ATP-dependent manner (PubMed:7814632, PubMed:8725158). May promote biliary phospholipid secretion as canaliculi-containing vesicles from the canalicular plasma membrane (PubMed:9366571). In cooperation with ATP8B1, functions to protect hepatocytes from the deleterious detergent activity of bile salts (PubMed:21820390). Does not confer multidrug resistance (PubMed:1990275).</text>
</comment>
<comment type="catalytic activity">
    <reaction evidence="16">
        <text>ATP + H2O + phospholipidSide 1 = ADP + phosphate + phospholipidSide 2.</text>
        <dbReference type="EC" id="7.6.2.1"/>
    </reaction>
</comment>
<comment type="catalytic activity">
    <reaction evidence="16">
        <text>a 1,2-diacyl-sn-glycero-3-phosphocholine(in) + ATP + H2O = a 1,2-diacyl-sn-glycero-3-phosphocholine(out) + ADP + phosphate + H(+)</text>
        <dbReference type="Rhea" id="RHEA:66272"/>
        <dbReference type="ChEBI" id="CHEBI:15377"/>
        <dbReference type="ChEBI" id="CHEBI:15378"/>
        <dbReference type="ChEBI" id="CHEBI:30616"/>
        <dbReference type="ChEBI" id="CHEBI:43474"/>
        <dbReference type="ChEBI" id="CHEBI:57643"/>
        <dbReference type="ChEBI" id="CHEBI:456216"/>
    </reaction>
    <physiologicalReaction direction="left-to-right" evidence="16">
        <dbReference type="Rhea" id="RHEA:66273"/>
    </physiologicalReaction>
</comment>
<comment type="catalytic activity">
    <reaction evidence="2">
        <text>a 1,2-diacyl-sn-glycero-3-phosphoethanolamine(in) + ATP + H2O = a 1,2-diacyl-sn-glycero-3-phosphoethanolamine(out) + ADP + phosphate + H(+)</text>
        <dbReference type="Rhea" id="RHEA:36439"/>
        <dbReference type="ChEBI" id="CHEBI:15377"/>
        <dbReference type="ChEBI" id="CHEBI:15378"/>
        <dbReference type="ChEBI" id="CHEBI:30616"/>
        <dbReference type="ChEBI" id="CHEBI:43474"/>
        <dbReference type="ChEBI" id="CHEBI:64612"/>
        <dbReference type="ChEBI" id="CHEBI:456216"/>
    </reaction>
    <physiologicalReaction direction="left-to-right" evidence="2">
        <dbReference type="Rhea" id="RHEA:36440"/>
    </physiologicalReaction>
</comment>
<comment type="catalytic activity">
    <reaction evidence="2">
        <text>a sphingomyelin(in) + ATP + H2O = a sphingomyelin(out) + ADP + phosphate + H(+)</text>
        <dbReference type="Rhea" id="RHEA:38903"/>
        <dbReference type="ChEBI" id="CHEBI:15377"/>
        <dbReference type="ChEBI" id="CHEBI:15378"/>
        <dbReference type="ChEBI" id="CHEBI:17636"/>
        <dbReference type="ChEBI" id="CHEBI:30616"/>
        <dbReference type="ChEBI" id="CHEBI:43474"/>
        <dbReference type="ChEBI" id="CHEBI:456216"/>
    </reaction>
    <physiologicalReaction direction="left-to-right" evidence="2">
        <dbReference type="Rhea" id="RHEA:38904"/>
    </physiologicalReaction>
</comment>
<comment type="activity regulation">
    <text evidence="14 16">Translocation activity is inhibited by the ATPase inhibitor vanadate and the calcium channel blocker verapamil (PubMed:7912658). Translocation activity is enhanced by the addition of the bile salt taurocholate (PubMed:7592705).</text>
</comment>
<comment type="subunit">
    <text evidence="2 3">May interact with RACK1. Interacts with HAX1.</text>
</comment>
<comment type="subcellular location">
    <subcellularLocation>
        <location evidence="12 17 18">Cell membrane</location>
        <topology evidence="6">Multi-pass membrane protein</topology>
    </subcellularLocation>
    <subcellularLocation>
        <location evidence="8">Apical cell membrane</location>
        <topology evidence="6">Multi-pass membrane protein</topology>
    </subcellularLocation>
    <subcellularLocation>
        <location evidence="2">Membrane raft</location>
    </subcellularLocation>
    <subcellularLocation>
        <location evidence="2">Cytoplasm</location>
    </subcellularLocation>
    <subcellularLocation>
        <location evidence="3">Cytoplasmic vesicle</location>
        <location evidence="3">Clathrin-coated vesicle</location>
    </subcellularLocation>
    <text evidence="2 8 12 17 18">Transported from the Golgi to the apical bile canalicular membrane in a RACK1-dependent manner. Redistributed into pseudocanaliculi formed between cells in a bezafibrate- or PPARA-dependent manner (By similarity). Localized at the apical canalicular membrane of the epithelial cells lining the lumen of the bile canaliculi and biliary ductules (PubMed:1381362, PubMed:8106172, PubMed:8615769). Localized preferentially in lipid nonraft domains of canalicular plasma membranes (PubMed:23468132).</text>
</comment>
<comment type="tissue specificity">
    <text evidence="8 9 13 18">Expressed in the liver (PubMed:1381362, PubMed:8615769) (at protein level). Expressed in adrenal, liver, muscle, spleen and heart (PubMed:2471060). Expressed in multidrug-resistant cell lines (PubMed:1969609).</text>
</comment>
<comment type="induction">
    <text evidence="7 18">Up-regulated by compounds that cause peroxisome proliferation, such as ciprofibrate and clofibrate (at protein level) (PubMed:8615769). Up-regulated by compounds that cause peroxisome proliferation, such as fenofibrate, ciprofibrate, clofibrate, bezafibrate and gemfibrozil (PubMed:12381268, PubMed:8615769).</text>
</comment>
<comment type="PTM">
    <text evidence="2">Phosphorylated. Phosphorylation is required for PC efflux activity. Phosphorylation occurs on serine and threonine residues in a protein kinase A- or C-dependent manner. May be phosphorylated on Thr-41 and Ser-46.</text>
</comment>
<comment type="PTM">
    <text evidence="2">Glycosylated.</text>
</comment>
<comment type="disruption phenotype">
    <text evidence="11 15 17 19 20">Mice show severe necrotic damage of hepatocytes, strong portal inflammation, proliferation and destruction of the canalicular and small bile ductular tracts (PubMed:8106172). Display almost complete reduction of biliary phospholipid secretion, although bile salt secretion is normal (PubMed:7814632, PubMed:8106172, PubMed:8725158, PubMed:9366571). Show also reduced cholesterol secretion (PubMed:8106172, PubMed:9366571). Knockout mice lacking both ABCB4 and ATP8B1 show lower hepatic damage compared with the single ABCB4 knockout mice (PubMed:21820390). Display equivalent reduction of biliary phosphatidylcholine (PC) secretion as the single ABCB4 knockout mice (PubMed:21820390). Biliary cholesterol secretion is higher compared to the single ABCB4 knockout mice (PubMed:21820390). Bile salt secretion is normal in both single ABCB4 knockout mice and double ABCB4 and ATP8B1 knockout mice (PubMed:21820390). Biliary excretion of canalicular ectoenzymes, aminopeptidase N and alkaline phosphatase is strongly reduced compared to single ATP8B1 knockout mice (PubMed:21820390).</text>
</comment>
<comment type="similarity">
    <text evidence="22">Belongs to the ABC transporter superfamily. ABCB family. Multidrug resistance exporter (TC 3.A.1.201) subfamily.</text>
</comment>
<sequence>MDLEAARNGTARRLDGDFELGSISNQGREKKKKVNLIGLLTLFRYSDWQDKLFMFLGTLMAIAHGSGLPLMMIVFGEMTDKFVDNTGNFSLPVNFSLSMLNPGRILEEEMTRYAYYYSGLGGGVLVAAYIQVSFWTLAAGRQIKKIRQKFFHAILRQEMGWFDIKGTTELNTRLTDDVSKISEGIGDKVGMFFQAIATFFAGFIVGFIRGWKLTLVIMAISPILGLSTAVWAKILSTFSDKELAAYAKAGAVAEEALGAIRTVIAFGGQNKELERYQKHLENAKKIGIKKAISANISMGIAFLLIYASYALAFWYGSTLVISKEYTIGNAMTVFFSILIGAFSVGQAAPCIDAFANARGAAYVIFDIIDNNPKIDSFSERGHKPDNIKGNLEFSDVHFSYPSRANIKILKGLNLKVKSGQTVALVGNSGCGKSTTVQLLQRLYDPTEGKISIDGQDIRNFNVRCLREIIGVVSQEPVLFSTTIAENIRYGRGNVTMDEIEKAVKEANAYDFIMKLPQKFDTLVGDRGAQLSGGQKQRIAIARALVRNPKILLLDEATSALDTESEAEVQAALDKAREGRTTIVIAHRLSTIRNADVIAGFEDGVIVEQGSHSELMKKEGIYFRLVNMQTAGSQILSEEFEVELSDEKAAGDVAPNGWKARIFRNSTKKSLKSPHQNRLDEETNELDANVPPVSFLKVLKLNKTEWPYFVVGTVCAIANGALQPAFSIILSEMIAIFGPGDDAVKQQKCNMFSLVFLGLGVLSFFTFFLQGFTFGKAGEILTTRLRSMAFKAMLRQDMSWFDDHKNSTGALSTRLATDAAQVQGATGTRLALIAQNTANLGTGIIISFIYGWQLTLLLLSVVPFIAVAGIVEMKMLAGNAKRDKKEMEAAGKIATEAIENIRTVVSLTQERKFESMYVEKLHGPYRNSVRKAHIYGITFSISQAFMYFSYAGCFRFGSYLIVNGHMRFKDVILVFSAIVLGAVALGHASSFAPDYAKAKLSAAYLFSLFERQPLIDSYSGEGLWPDKFEGSVTFNEVVFNYPTRANVPVLQGLSLEVKKGQTLALVGSSGCGKSTVVQLLERFYDPMAGSVLLDGQEAKKLNVQWLRAQLGIVSQEPILFDCSIAENIAYGDNSRVVPHDEIVRAAKEANIHPFIETLPQKYNTRVGDKGTQLSGGQKQRIAIARALIRQPRVLLLDEATSALDTESEKVVQEALDKAREGRTCIVIAHRLSTIQNADLIVVIENGKVKEHGTHQQLLAQKGIYFSMVNIQAGTQNL</sequence>
<gene>
    <name evidence="23" type="primary">Abcb4</name>
    <name evidence="21" type="synonym">Mdr2</name>
    <name type="synonym">Pgy-2</name>
    <name evidence="3" type="synonym">Pgy2</name>
</gene>
<accession>P21440</accession>
<accession>B9EK77</accession>
<accession>Q6LCL9</accession>
<feature type="chain" id="PRO_0000093337" description="Phosphatidylcholine translocator ABCB4">
    <location>
        <begin position="1"/>
        <end position="1276"/>
    </location>
</feature>
<feature type="topological domain" description="Cytoplasmic" evidence="1">
    <location>
        <begin position="1"/>
        <end position="47"/>
    </location>
</feature>
<feature type="transmembrane region" description="Helical" evidence="6">
    <location>
        <begin position="48"/>
        <end position="70"/>
    </location>
</feature>
<feature type="topological domain" description="Extracellular" evidence="1">
    <location>
        <begin position="71"/>
        <end position="115"/>
    </location>
</feature>
<feature type="transmembrane region" description="Helical" evidence="6">
    <location>
        <begin position="116"/>
        <end position="136"/>
    </location>
</feature>
<feature type="topological domain" description="Cytoplasmic" evidence="1">
    <location>
        <begin position="137"/>
        <end position="185"/>
    </location>
</feature>
<feature type="transmembrane region" description="Helical" evidence="6">
    <location>
        <begin position="186"/>
        <end position="207"/>
    </location>
</feature>
<feature type="topological domain" description="Extracellular" evidence="1">
    <location>
        <begin position="208"/>
        <end position="212"/>
    </location>
</feature>
<feature type="transmembrane region" description="Helical" evidence="6">
    <location>
        <begin position="213"/>
        <end position="235"/>
    </location>
</feature>
<feature type="topological domain" description="Cytoplasmic" evidence="1">
    <location>
        <begin position="236"/>
        <end position="293"/>
    </location>
</feature>
<feature type="transmembrane region" description="Helical" evidence="6">
    <location>
        <begin position="294"/>
        <end position="315"/>
    </location>
</feature>
<feature type="topological domain" description="Extracellular" evidence="1">
    <location>
        <begin position="316"/>
        <end position="329"/>
    </location>
</feature>
<feature type="transmembrane region" description="Helical" evidence="6">
    <location>
        <begin position="330"/>
        <end position="351"/>
    </location>
</feature>
<feature type="topological domain" description="Cytoplasmic" evidence="1">
    <location>
        <begin position="352"/>
        <end position="708"/>
    </location>
</feature>
<feature type="transmembrane region" description="Helical" evidence="6">
    <location>
        <begin position="709"/>
        <end position="729"/>
    </location>
</feature>
<feature type="topological domain" description="Extracellular" evidence="1">
    <location>
        <begin position="730"/>
        <end position="752"/>
    </location>
</feature>
<feature type="transmembrane region" description="Helical" evidence="6">
    <location>
        <begin position="753"/>
        <end position="773"/>
    </location>
</feature>
<feature type="topological domain" description="Cytoplasmic" evidence="1">
    <location>
        <begin position="774"/>
        <end position="828"/>
    </location>
</feature>
<feature type="transmembrane region" description="Helical" evidence="6">
    <location>
        <begin position="829"/>
        <end position="849"/>
    </location>
</feature>
<feature type="topological domain" description="Extracellular" evidence="1">
    <location>
        <position position="850"/>
    </location>
</feature>
<feature type="transmembrane region" description="Helical" evidence="6">
    <location>
        <begin position="851"/>
        <end position="870"/>
    </location>
</feature>
<feature type="topological domain" description="Cytoplasmic" evidence="1">
    <location>
        <begin position="871"/>
        <end position="930"/>
    </location>
</feature>
<feature type="transmembrane region" description="Helical" evidence="6">
    <location>
        <begin position="931"/>
        <end position="953"/>
    </location>
</feature>
<feature type="topological domain" description="Extracellular" evidence="1">
    <location>
        <begin position="954"/>
        <end position="969"/>
    </location>
</feature>
<feature type="transmembrane region" description="Helical" evidence="6">
    <location>
        <begin position="970"/>
        <end position="991"/>
    </location>
</feature>
<feature type="topological domain" description="Cytoplasmic" evidence="1">
    <location>
        <begin position="992"/>
        <end position="1276"/>
    </location>
</feature>
<feature type="domain" description="ABC transmembrane type-1 1" evidence="6">
    <location>
        <begin position="54"/>
        <end position="356"/>
    </location>
</feature>
<feature type="domain" description="ABC transporter 1" evidence="5">
    <location>
        <begin position="391"/>
        <end position="627"/>
    </location>
</feature>
<feature type="domain" description="ABC transmembrane type-1 2" evidence="6">
    <location>
        <begin position="708"/>
        <end position="996"/>
    </location>
</feature>
<feature type="domain" description="ABC transporter 2" evidence="5">
    <location>
        <begin position="1031"/>
        <end position="1269"/>
    </location>
</feature>
<feature type="region of interest" description="Interaction with HAX1" evidence="1">
    <location>
        <begin position="622"/>
        <end position="646"/>
    </location>
</feature>
<feature type="binding site" evidence="2">
    <location>
        <position position="403"/>
    </location>
    <ligand>
        <name>ATP</name>
        <dbReference type="ChEBI" id="CHEBI:30616"/>
        <label>1</label>
    </ligand>
</feature>
<feature type="binding site" evidence="2 5">
    <location>
        <begin position="429"/>
        <end position="434"/>
    </location>
    <ligand>
        <name>ATP</name>
        <dbReference type="ChEBI" id="CHEBI:30616"/>
        <label>1</label>
    </ligand>
</feature>
<feature type="binding site" evidence="2">
    <location>
        <position position="474"/>
    </location>
    <ligand>
        <name>ATP</name>
        <dbReference type="ChEBI" id="CHEBI:30616"/>
        <label>1</label>
    </ligand>
</feature>
<feature type="binding site" evidence="2">
    <location>
        <position position="533"/>
    </location>
    <ligand>
        <name>ATP</name>
        <dbReference type="ChEBI" id="CHEBI:30616"/>
        <label>2</label>
    </ligand>
</feature>
<feature type="binding site" evidence="2">
    <location>
        <position position="1043"/>
    </location>
    <ligand>
        <name>ATP</name>
        <dbReference type="ChEBI" id="CHEBI:30616"/>
        <label>2</label>
    </ligand>
</feature>
<feature type="binding site" evidence="2 5">
    <location>
        <begin position="1068"/>
        <end position="1074"/>
    </location>
    <ligand>
        <name>ATP</name>
        <dbReference type="ChEBI" id="CHEBI:30616"/>
        <label>2</label>
    </ligand>
</feature>
<feature type="binding site" evidence="2">
    <location>
        <position position="1114"/>
    </location>
    <ligand>
        <name>ATP</name>
        <dbReference type="ChEBI" id="CHEBI:30616"/>
        <label>2</label>
    </ligand>
</feature>
<feature type="binding site" evidence="2 5">
    <location>
        <begin position="1174"/>
        <end position="1176"/>
    </location>
    <ligand>
        <name>ATP</name>
        <dbReference type="ChEBI" id="CHEBI:30616"/>
        <label>1</label>
    </ligand>
</feature>
<feature type="modified residue" description="Phosphoserine" evidence="24">
    <location>
        <position position="24"/>
    </location>
</feature>
<feature type="glycosylation site" description="N-linked (GlcNAc...) asparagine" evidence="4">
    <location>
        <position position="88"/>
    </location>
</feature>
<feature type="glycosylation site" description="N-linked (GlcNAc...) asparagine" evidence="4">
    <location>
        <position position="94"/>
    </location>
</feature>
<feature type="sequence conflict" description="In Ref. 1; AAA39516." evidence="22" ref="1">
    <original>L</original>
    <variation>P</variation>
    <location>
        <position position="257"/>
    </location>
</feature>
<feature type="sequence conflict" description="In Ref. 1; AAA39516." evidence="22" ref="1">
    <original>R</original>
    <variation>K</variation>
    <location>
        <position position="828"/>
    </location>
</feature>
<evidence type="ECO:0000250" key="1"/>
<evidence type="ECO:0000250" key="2">
    <source>
        <dbReference type="UniProtKB" id="P21439"/>
    </source>
</evidence>
<evidence type="ECO:0000250" key="3">
    <source>
        <dbReference type="UniProtKB" id="Q08201"/>
    </source>
</evidence>
<evidence type="ECO:0000255" key="4"/>
<evidence type="ECO:0000255" key="5">
    <source>
        <dbReference type="PROSITE-ProRule" id="PRU00434"/>
    </source>
</evidence>
<evidence type="ECO:0000255" key="6">
    <source>
        <dbReference type="PROSITE-ProRule" id="PRU00441"/>
    </source>
</evidence>
<evidence type="ECO:0000269" key="7">
    <source>
    </source>
</evidence>
<evidence type="ECO:0000269" key="8">
    <source>
    </source>
</evidence>
<evidence type="ECO:0000269" key="9">
    <source>
    </source>
</evidence>
<evidence type="ECO:0000269" key="10">
    <source>
    </source>
</evidence>
<evidence type="ECO:0000269" key="11">
    <source>
    </source>
</evidence>
<evidence type="ECO:0000269" key="12">
    <source>
    </source>
</evidence>
<evidence type="ECO:0000269" key="13">
    <source>
    </source>
</evidence>
<evidence type="ECO:0000269" key="14">
    <source>
    </source>
</evidence>
<evidence type="ECO:0000269" key="15">
    <source>
    </source>
</evidence>
<evidence type="ECO:0000269" key="16">
    <source>
    </source>
</evidence>
<evidence type="ECO:0000269" key="17">
    <source>
    </source>
</evidence>
<evidence type="ECO:0000269" key="18">
    <source>
    </source>
</evidence>
<evidence type="ECO:0000269" key="19">
    <source>
    </source>
</evidence>
<evidence type="ECO:0000269" key="20">
    <source>
    </source>
</evidence>
<evidence type="ECO:0000303" key="21">
    <source>
    </source>
</evidence>
<evidence type="ECO:0000305" key="22"/>
<evidence type="ECO:0000312" key="23">
    <source>
        <dbReference type="MGI" id="MGI:97569"/>
    </source>
</evidence>
<evidence type="ECO:0007744" key="24">
    <source>
    </source>
</evidence>
<dbReference type="EC" id="7.6.2.1" evidence="16"/>
<dbReference type="EMBL" id="J03398">
    <property type="protein sequence ID" value="AAA39516.1"/>
    <property type="molecule type" value="mRNA"/>
</dbReference>
<dbReference type="EMBL" id="CH466600">
    <property type="protein sequence ID" value="EDL14681.1"/>
    <property type="molecule type" value="Genomic_DNA"/>
</dbReference>
<dbReference type="EMBL" id="BC150687">
    <property type="protein sequence ID" value="AAI50688.1"/>
    <property type="molecule type" value="mRNA"/>
</dbReference>
<dbReference type="EMBL" id="M74151">
    <property type="protein sequence ID" value="AAA39515.1"/>
    <property type="molecule type" value="Genomic_DNA"/>
</dbReference>
<dbReference type="EMBL" id="U46839">
    <property type="protein sequence ID" value="AAC52722.1"/>
    <property type="molecule type" value="Genomic_DNA"/>
</dbReference>
<dbReference type="CCDS" id="CCDS19086.1"/>
<dbReference type="PIR" id="A30409">
    <property type="entry name" value="DVMS2"/>
</dbReference>
<dbReference type="RefSeq" id="NP_032856.2">
    <property type="nucleotide sequence ID" value="NM_008830.2"/>
</dbReference>
<dbReference type="SMR" id="P21440"/>
<dbReference type="BioGRID" id="202139">
    <property type="interactions" value="1"/>
</dbReference>
<dbReference type="FunCoup" id="P21440">
    <property type="interactions" value="251"/>
</dbReference>
<dbReference type="STRING" id="10090.ENSMUSP00000003717"/>
<dbReference type="SwissLipids" id="SLP:000000362"/>
<dbReference type="GlyCosmos" id="P21440">
    <property type="glycosylation" value="2 sites, No reported glycans"/>
</dbReference>
<dbReference type="GlyGen" id="P21440">
    <property type="glycosylation" value="2 sites"/>
</dbReference>
<dbReference type="iPTMnet" id="P21440"/>
<dbReference type="PhosphoSitePlus" id="P21440"/>
<dbReference type="SwissPalm" id="P21440"/>
<dbReference type="jPOST" id="P21440"/>
<dbReference type="PaxDb" id="10090-ENSMUSP00000003717"/>
<dbReference type="PeptideAtlas" id="P21440"/>
<dbReference type="ProteomicsDB" id="293448"/>
<dbReference type="Antibodypedia" id="3853">
    <property type="antibodies" value="223 antibodies from 33 providers"/>
</dbReference>
<dbReference type="DNASU" id="18670"/>
<dbReference type="Ensembl" id="ENSMUST00000003717.13">
    <property type="protein sequence ID" value="ENSMUSP00000003717.9"/>
    <property type="gene ID" value="ENSMUSG00000042476.13"/>
</dbReference>
<dbReference type="GeneID" id="18670"/>
<dbReference type="KEGG" id="mmu:18670"/>
<dbReference type="UCSC" id="uc008wkr.2">
    <property type="organism name" value="mouse"/>
</dbReference>
<dbReference type="AGR" id="MGI:97569"/>
<dbReference type="CTD" id="5244"/>
<dbReference type="MGI" id="MGI:97569">
    <property type="gene designation" value="Abcb4"/>
</dbReference>
<dbReference type="VEuPathDB" id="HostDB:ENSMUSG00000042476"/>
<dbReference type="eggNOG" id="KOG0055">
    <property type="taxonomic scope" value="Eukaryota"/>
</dbReference>
<dbReference type="GeneTree" id="ENSGT00940000159418"/>
<dbReference type="HOGENOM" id="CLU_000604_17_2_1"/>
<dbReference type="InParanoid" id="P21440"/>
<dbReference type="OMA" id="YEMCLGQ"/>
<dbReference type="OrthoDB" id="6500128at2759"/>
<dbReference type="PhylomeDB" id="P21440"/>
<dbReference type="TreeFam" id="TF105193"/>
<dbReference type="Reactome" id="R-MMU-382556">
    <property type="pathway name" value="ABC-family proteins mediated transport"/>
</dbReference>
<dbReference type="BioGRID-ORCS" id="18670">
    <property type="hits" value="1 hit in 76 CRISPR screens"/>
</dbReference>
<dbReference type="ChiTaRS" id="Abcb4">
    <property type="organism name" value="mouse"/>
</dbReference>
<dbReference type="PRO" id="PR:P21440"/>
<dbReference type="Proteomes" id="UP000000589">
    <property type="component" value="Chromosome 5"/>
</dbReference>
<dbReference type="RNAct" id="P21440">
    <property type="molecule type" value="protein"/>
</dbReference>
<dbReference type="Bgee" id="ENSMUSG00000042476">
    <property type="expression patterns" value="Expressed in left lobe of liver and 172 other cell types or tissues"/>
</dbReference>
<dbReference type="ExpressionAtlas" id="P21440">
    <property type="expression patterns" value="baseline and differential"/>
</dbReference>
<dbReference type="GO" id="GO:0016324">
    <property type="term" value="C:apical plasma membrane"/>
    <property type="evidence" value="ECO:0000250"/>
    <property type="project" value="UniProtKB"/>
</dbReference>
<dbReference type="GO" id="GO:0030136">
    <property type="term" value="C:clathrin-coated vesicle"/>
    <property type="evidence" value="ECO:0007669"/>
    <property type="project" value="UniProtKB-SubCell"/>
</dbReference>
<dbReference type="GO" id="GO:0005737">
    <property type="term" value="C:cytoplasm"/>
    <property type="evidence" value="ECO:0000250"/>
    <property type="project" value="UniProtKB"/>
</dbReference>
<dbReference type="GO" id="GO:0005829">
    <property type="term" value="C:cytosol"/>
    <property type="evidence" value="ECO:0007669"/>
    <property type="project" value="Ensembl"/>
</dbReference>
<dbReference type="GO" id="GO:0005925">
    <property type="term" value="C:focal adhesion"/>
    <property type="evidence" value="ECO:0007669"/>
    <property type="project" value="Ensembl"/>
</dbReference>
<dbReference type="GO" id="GO:0046581">
    <property type="term" value="C:intercellular canaliculus"/>
    <property type="evidence" value="ECO:0000314"/>
    <property type="project" value="MGI"/>
</dbReference>
<dbReference type="GO" id="GO:0016020">
    <property type="term" value="C:membrane"/>
    <property type="evidence" value="ECO:0000314"/>
    <property type="project" value="MGI"/>
</dbReference>
<dbReference type="GO" id="GO:0045121">
    <property type="term" value="C:membrane raft"/>
    <property type="evidence" value="ECO:0007669"/>
    <property type="project" value="UniProtKB-SubCell"/>
</dbReference>
<dbReference type="GO" id="GO:0005654">
    <property type="term" value="C:nucleoplasm"/>
    <property type="evidence" value="ECO:0007669"/>
    <property type="project" value="Ensembl"/>
</dbReference>
<dbReference type="GO" id="GO:0005886">
    <property type="term" value="C:plasma membrane"/>
    <property type="evidence" value="ECO:0000314"/>
    <property type="project" value="UniProtKB"/>
</dbReference>
<dbReference type="GO" id="GO:0140359">
    <property type="term" value="F:ABC-type transporter activity"/>
    <property type="evidence" value="ECO:0007669"/>
    <property type="project" value="InterPro"/>
</dbReference>
<dbReference type="GO" id="GO:0005524">
    <property type="term" value="F:ATP binding"/>
    <property type="evidence" value="ECO:0007669"/>
    <property type="project" value="UniProtKB-KW"/>
</dbReference>
<dbReference type="GO" id="GO:0016887">
    <property type="term" value="F:ATP hydrolysis activity"/>
    <property type="evidence" value="ECO:0007669"/>
    <property type="project" value="InterPro"/>
</dbReference>
<dbReference type="GO" id="GO:0042626">
    <property type="term" value="F:ATPase-coupled transmembrane transporter activity"/>
    <property type="evidence" value="ECO:0000250"/>
    <property type="project" value="UniProtKB"/>
</dbReference>
<dbReference type="GO" id="GO:0090554">
    <property type="term" value="F:phosphatidylcholine floppase activity"/>
    <property type="evidence" value="ECO:0000250"/>
    <property type="project" value="UniProtKB"/>
</dbReference>
<dbReference type="GO" id="GO:0032782">
    <property type="term" value="P:bile acid secretion"/>
    <property type="evidence" value="ECO:0000315"/>
    <property type="project" value="UniProtKB"/>
</dbReference>
<dbReference type="GO" id="GO:1903413">
    <property type="term" value="P:cellular response to bile acid"/>
    <property type="evidence" value="ECO:0000250"/>
    <property type="project" value="UniProtKB"/>
</dbReference>
<dbReference type="GO" id="GO:0055088">
    <property type="term" value="P:lipid homeostasis"/>
    <property type="evidence" value="ECO:0000250"/>
    <property type="project" value="UniProtKB"/>
</dbReference>
<dbReference type="GO" id="GO:0045332">
    <property type="term" value="P:phospholipid translocation"/>
    <property type="evidence" value="ECO:0007669"/>
    <property type="project" value="Ensembl"/>
</dbReference>
<dbReference type="GO" id="GO:0032376">
    <property type="term" value="P:positive regulation of cholesterol transport"/>
    <property type="evidence" value="ECO:0000250"/>
    <property type="project" value="UniProtKB"/>
</dbReference>
<dbReference type="GO" id="GO:0061092">
    <property type="term" value="P:positive regulation of phospholipid translocation"/>
    <property type="evidence" value="ECO:0000250"/>
    <property type="project" value="UniProtKB"/>
</dbReference>
<dbReference type="GO" id="GO:2001140">
    <property type="term" value="P:positive regulation of phospholipid transport"/>
    <property type="evidence" value="ECO:0000250"/>
    <property type="project" value="UniProtKB"/>
</dbReference>
<dbReference type="GO" id="GO:1901557">
    <property type="term" value="P:response to fenofibrate"/>
    <property type="evidence" value="ECO:0000314"/>
    <property type="project" value="UniProtKB"/>
</dbReference>
<dbReference type="CDD" id="cd18578">
    <property type="entry name" value="ABC_6TM_Pgp_ABCB1_D2_like"/>
    <property type="match status" value="1"/>
</dbReference>
<dbReference type="CDD" id="cd03249">
    <property type="entry name" value="ABC_MTABC3_MDL1_MDL2"/>
    <property type="match status" value="2"/>
</dbReference>
<dbReference type="FunFam" id="1.20.1560.10:FF:000018">
    <property type="entry name" value="ATP-binding cassette subfamily B member 11"/>
    <property type="match status" value="1"/>
</dbReference>
<dbReference type="FunFam" id="1.20.1560.10:FF:000043">
    <property type="entry name" value="Multidrug resistance protein 1A"/>
    <property type="match status" value="1"/>
</dbReference>
<dbReference type="FunFam" id="3.40.50.300:FF:000479">
    <property type="entry name" value="Multidrug resistance protein 1A"/>
    <property type="match status" value="2"/>
</dbReference>
<dbReference type="FunFam" id="1.20.1560.10:FF:000083">
    <property type="entry name" value="phosphatidylcholine translocator ABCB4 isoform X7"/>
    <property type="match status" value="1"/>
</dbReference>
<dbReference type="Gene3D" id="1.20.1560.10">
    <property type="entry name" value="ABC transporter type 1, transmembrane domain"/>
    <property type="match status" value="1"/>
</dbReference>
<dbReference type="Gene3D" id="3.40.50.300">
    <property type="entry name" value="P-loop containing nucleotide triphosphate hydrolases"/>
    <property type="match status" value="2"/>
</dbReference>
<dbReference type="InterPro" id="IPR003593">
    <property type="entry name" value="AAA+_ATPase"/>
</dbReference>
<dbReference type="InterPro" id="IPR011527">
    <property type="entry name" value="ABC1_TM_dom"/>
</dbReference>
<dbReference type="InterPro" id="IPR036640">
    <property type="entry name" value="ABC1_TM_sf"/>
</dbReference>
<dbReference type="InterPro" id="IPR003439">
    <property type="entry name" value="ABC_transporter-like_ATP-bd"/>
</dbReference>
<dbReference type="InterPro" id="IPR017871">
    <property type="entry name" value="ABC_transporter-like_CS"/>
</dbReference>
<dbReference type="InterPro" id="IPR027417">
    <property type="entry name" value="P-loop_NTPase"/>
</dbReference>
<dbReference type="InterPro" id="IPR039421">
    <property type="entry name" value="Type_1_exporter"/>
</dbReference>
<dbReference type="PANTHER" id="PTHR43394:SF28">
    <property type="entry name" value="ATP-BINDING CASSETTE SUBFAMILY B MEMBER 1"/>
    <property type="match status" value="1"/>
</dbReference>
<dbReference type="PANTHER" id="PTHR43394">
    <property type="entry name" value="ATP-DEPENDENT PERMEASE MDL1, MITOCHONDRIAL"/>
    <property type="match status" value="1"/>
</dbReference>
<dbReference type="Pfam" id="PF00664">
    <property type="entry name" value="ABC_membrane"/>
    <property type="match status" value="2"/>
</dbReference>
<dbReference type="Pfam" id="PF00005">
    <property type="entry name" value="ABC_tran"/>
    <property type="match status" value="2"/>
</dbReference>
<dbReference type="SMART" id="SM00382">
    <property type="entry name" value="AAA"/>
    <property type="match status" value="2"/>
</dbReference>
<dbReference type="SUPFAM" id="SSF90123">
    <property type="entry name" value="ABC transporter transmembrane region"/>
    <property type="match status" value="2"/>
</dbReference>
<dbReference type="SUPFAM" id="SSF52540">
    <property type="entry name" value="P-loop containing nucleoside triphosphate hydrolases"/>
    <property type="match status" value="2"/>
</dbReference>
<dbReference type="PROSITE" id="PS50929">
    <property type="entry name" value="ABC_TM1F"/>
    <property type="match status" value="2"/>
</dbReference>
<dbReference type="PROSITE" id="PS00211">
    <property type="entry name" value="ABC_TRANSPORTER_1"/>
    <property type="match status" value="2"/>
</dbReference>
<dbReference type="PROSITE" id="PS50893">
    <property type="entry name" value="ABC_TRANSPORTER_2"/>
    <property type="match status" value="2"/>
</dbReference>
<name>MDR3_MOUSE</name>
<proteinExistence type="evidence at protein level"/>
<keyword id="KW-0067">ATP-binding</keyword>
<keyword id="KW-1003">Cell membrane</keyword>
<keyword id="KW-0963">Cytoplasm</keyword>
<keyword id="KW-0968">Cytoplasmic vesicle</keyword>
<keyword id="KW-0325">Glycoprotein</keyword>
<keyword id="KW-0445">Lipid transport</keyword>
<keyword id="KW-0472">Membrane</keyword>
<keyword id="KW-0547">Nucleotide-binding</keyword>
<keyword id="KW-0597">Phosphoprotein</keyword>
<keyword id="KW-1185">Reference proteome</keyword>
<keyword id="KW-0677">Repeat</keyword>
<keyword id="KW-1278">Translocase</keyword>
<keyword id="KW-0812">Transmembrane</keyword>
<keyword id="KW-1133">Transmembrane helix</keyword>
<keyword id="KW-0813">Transport</keyword>
<protein>
    <recommendedName>
        <fullName evidence="22">Phosphatidylcholine translocator ABCB4</fullName>
        <ecNumber evidence="16">7.6.2.1</ecNumber>
    </recommendedName>
    <alternativeName>
        <fullName evidence="23">ATP-binding cassette sub-family B member 4</fullName>
    </alternativeName>
    <alternativeName>
        <fullName evidence="21">Multidrug resistance protein 2</fullName>
    </alternativeName>
    <alternativeName>
        <fullName evidence="2">Multidrug resistance protein 3</fullName>
    </alternativeName>
    <alternativeName>
        <fullName evidence="3">P-glycoprotein 2</fullName>
    </alternativeName>
    <alternativeName>
        <fullName evidence="3">P-glycoprotein 3</fullName>
    </alternativeName>
</protein>